<protein>
    <recommendedName>
        <fullName>Histone H2B</fullName>
    </recommendedName>
</protein>
<name>H2B_PLADU</name>
<organism>
    <name type="scientific">Platynereis dumerilii</name>
    <name type="common">Dumeril's clam worm</name>
    <dbReference type="NCBI Taxonomy" id="6359"/>
    <lineage>
        <taxon>Eukaryota</taxon>
        <taxon>Metazoa</taxon>
        <taxon>Spiralia</taxon>
        <taxon>Lophotrochozoa</taxon>
        <taxon>Annelida</taxon>
        <taxon>Polychaeta</taxon>
        <taxon>Errantia</taxon>
        <taxon>Phyllodocida</taxon>
        <taxon>Nereididae</taxon>
        <taxon>Platynereis</taxon>
    </lineage>
</organism>
<feature type="initiator methionine" description="Removed" evidence="1">
    <location>
        <position position="1"/>
    </location>
</feature>
<feature type="chain" id="PRO_0000071872" description="Histone H2B">
    <location>
        <begin position="2"/>
        <end position="123"/>
    </location>
</feature>
<feature type="region of interest" description="Disordered" evidence="2">
    <location>
        <begin position="1"/>
        <end position="31"/>
    </location>
</feature>
<feature type="compositionally biased region" description="Basic residues" evidence="2">
    <location>
        <begin position="9"/>
        <end position="31"/>
    </location>
</feature>
<feature type="glycosylation site" description="O-linked (GlcNAc) serine" evidence="1">
    <location>
        <position position="110"/>
    </location>
</feature>
<feature type="cross-link" description="Glycyl lysine isopeptide (Lys-Gly) (interchain with G-Cter in ubiquitin)" evidence="1">
    <location>
        <position position="118"/>
    </location>
</feature>
<accession>P19374</accession>
<comment type="function">
    <text>Core component of nucleosome. Nucleosomes wrap and compact DNA into chromatin, limiting DNA accessibility to the cellular machineries which require DNA as a template. Histones thereby play a central role in transcription regulation, DNA repair, DNA replication and chromosomal stability. DNA accessibility is regulated via a complex set of post-translational modifications of histones, also called histone code, and nucleosome remodeling.</text>
</comment>
<comment type="subunit">
    <text>The nucleosome is a histone octamer containing two molecules each of H2A, H2B, H3 and H4 assembled in one H3-H4 heterotetramer and two H2A-H2B heterodimers. The octamer wraps approximately 147 bp of DNA.</text>
</comment>
<comment type="subcellular location">
    <subcellularLocation>
        <location>Nucleus</location>
    </subcellularLocation>
    <subcellularLocation>
        <location>Chromosome</location>
    </subcellularLocation>
</comment>
<comment type="PTM">
    <text evidence="1">Monoubiquitination of Lys-118 gives a specific tag for epigenetic transcriptional activation and is also prerequisite for histone H3 'Lys-4' and 'Lys-79' methylation.</text>
</comment>
<comment type="PTM">
    <text evidence="1">GlcNAcylation at Ser-110 promotes monoubiquitination of Lys-118. It fluctuates in response to extracellular glucose, and associates with transcribed genes (By similarity).</text>
</comment>
<comment type="similarity">
    <text evidence="3">Belongs to the histone H2B family.</text>
</comment>
<dbReference type="EMBL" id="X53330">
    <property type="protein sequence ID" value="CAA37415.1"/>
    <property type="molecule type" value="Genomic_DNA"/>
</dbReference>
<dbReference type="PIR" id="S11313">
    <property type="entry name" value="S11313"/>
</dbReference>
<dbReference type="SMR" id="P19374"/>
<dbReference type="GO" id="GO:0000786">
    <property type="term" value="C:nucleosome"/>
    <property type="evidence" value="ECO:0007669"/>
    <property type="project" value="UniProtKB-KW"/>
</dbReference>
<dbReference type="GO" id="GO:0005634">
    <property type="term" value="C:nucleus"/>
    <property type="evidence" value="ECO:0007669"/>
    <property type="project" value="UniProtKB-SubCell"/>
</dbReference>
<dbReference type="GO" id="GO:0003677">
    <property type="term" value="F:DNA binding"/>
    <property type="evidence" value="ECO:0007669"/>
    <property type="project" value="UniProtKB-KW"/>
</dbReference>
<dbReference type="GO" id="GO:0046982">
    <property type="term" value="F:protein heterodimerization activity"/>
    <property type="evidence" value="ECO:0007669"/>
    <property type="project" value="InterPro"/>
</dbReference>
<dbReference type="GO" id="GO:0044877">
    <property type="term" value="F:protein-containing complex binding"/>
    <property type="evidence" value="ECO:0000250"/>
    <property type="project" value="UniProtKB"/>
</dbReference>
<dbReference type="GO" id="GO:0030527">
    <property type="term" value="F:structural constituent of chromatin"/>
    <property type="evidence" value="ECO:0007669"/>
    <property type="project" value="InterPro"/>
</dbReference>
<dbReference type="CDD" id="cd22910">
    <property type="entry name" value="HFD_H2B"/>
    <property type="match status" value="1"/>
</dbReference>
<dbReference type="FunFam" id="1.10.20.10:FF:000016">
    <property type="entry name" value="Histone H2B"/>
    <property type="match status" value="1"/>
</dbReference>
<dbReference type="Gene3D" id="1.10.20.10">
    <property type="entry name" value="Histone, subunit A"/>
    <property type="match status" value="1"/>
</dbReference>
<dbReference type="InterPro" id="IPR009072">
    <property type="entry name" value="Histone-fold"/>
</dbReference>
<dbReference type="InterPro" id="IPR007125">
    <property type="entry name" value="Histone_H2A/H2B/H3"/>
</dbReference>
<dbReference type="InterPro" id="IPR000558">
    <property type="entry name" value="Histone_H2B"/>
</dbReference>
<dbReference type="InterPro" id="IPR055333">
    <property type="entry name" value="HISTONE_H2B_site"/>
</dbReference>
<dbReference type="PANTHER" id="PTHR23428">
    <property type="entry name" value="HISTONE H2B"/>
    <property type="match status" value="1"/>
</dbReference>
<dbReference type="Pfam" id="PF00125">
    <property type="entry name" value="Histone"/>
    <property type="match status" value="1"/>
</dbReference>
<dbReference type="PRINTS" id="PR00621">
    <property type="entry name" value="HISTONEH2B"/>
</dbReference>
<dbReference type="SMART" id="SM00427">
    <property type="entry name" value="H2B"/>
    <property type="match status" value="1"/>
</dbReference>
<dbReference type="SUPFAM" id="SSF47113">
    <property type="entry name" value="Histone-fold"/>
    <property type="match status" value="1"/>
</dbReference>
<dbReference type="PROSITE" id="PS00357">
    <property type="entry name" value="HISTONE_H2B"/>
    <property type="match status" value="1"/>
</dbReference>
<proteinExistence type="inferred from homology"/>
<sequence>MPPKVASKGAKKAASKAKAARSGEKKKKRRRRESYSIYIYKVLKQVHPDTGISSKAMSIMNSFVNDIFERIAAEASRLAHYNKRSTITSREIQTAVRLLLPGELAKHAVSEGTKAVTKYTSSK</sequence>
<reference key="1">
    <citation type="journal article" date="1990" name="Eur. J. Biochem.">
        <title>Organization and complete nucleotide sequence of the core-histone-gene cluster of the annelid Platynereis dumerilii.</title>
        <authorList>
            <person name="Sellos D."/>
            <person name="Krawetz S.A."/>
            <person name="Dixon G.H."/>
        </authorList>
    </citation>
    <scope>NUCLEOTIDE SEQUENCE [GENOMIC DNA]</scope>
    <source>
        <tissue>Sperm</tissue>
    </source>
</reference>
<evidence type="ECO:0000250" key="1"/>
<evidence type="ECO:0000256" key="2">
    <source>
        <dbReference type="SAM" id="MobiDB-lite"/>
    </source>
</evidence>
<evidence type="ECO:0000305" key="3"/>
<keyword id="KW-0158">Chromosome</keyword>
<keyword id="KW-0238">DNA-binding</keyword>
<keyword id="KW-0325">Glycoprotein</keyword>
<keyword id="KW-1017">Isopeptide bond</keyword>
<keyword id="KW-0544">Nucleosome core</keyword>
<keyword id="KW-0539">Nucleus</keyword>
<keyword id="KW-0832">Ubl conjugation</keyword>